<keyword id="KW-0046">Antibiotic resistance</keyword>
<keyword id="KW-0997">Cell inner membrane</keyword>
<keyword id="KW-1003">Cell membrane</keyword>
<keyword id="KW-0133">Cell shape</keyword>
<keyword id="KW-0961">Cell wall biogenesis/degradation</keyword>
<keyword id="KW-0378">Hydrolase</keyword>
<keyword id="KW-0472">Membrane</keyword>
<keyword id="KW-0573">Peptidoglycan synthesis</keyword>
<keyword id="KW-1185">Reference proteome</keyword>
<keyword id="KW-0812">Transmembrane</keyword>
<keyword id="KW-1133">Transmembrane helix</keyword>
<gene>
    <name evidence="1" type="primary">uppP</name>
    <name type="synonym">bacA</name>
    <name type="synonym">upk</name>
    <name type="ordered locus">PP_2862</name>
</gene>
<organism>
    <name type="scientific">Pseudomonas putida (strain ATCC 47054 / DSM 6125 / CFBP 8728 / NCIMB 11950 / KT2440)</name>
    <dbReference type="NCBI Taxonomy" id="160488"/>
    <lineage>
        <taxon>Bacteria</taxon>
        <taxon>Pseudomonadati</taxon>
        <taxon>Pseudomonadota</taxon>
        <taxon>Gammaproteobacteria</taxon>
        <taxon>Pseudomonadales</taxon>
        <taxon>Pseudomonadaceae</taxon>
        <taxon>Pseudomonas</taxon>
    </lineage>
</organism>
<feature type="chain" id="PRO_0000151182" description="Undecaprenyl-diphosphatase">
    <location>
        <begin position="1"/>
        <end position="277"/>
    </location>
</feature>
<feature type="transmembrane region" description="Helical" evidence="1">
    <location>
        <begin position="44"/>
        <end position="64"/>
    </location>
</feature>
<feature type="transmembrane region" description="Helical" evidence="1">
    <location>
        <begin position="86"/>
        <end position="106"/>
    </location>
</feature>
<feature type="transmembrane region" description="Helical" evidence="1">
    <location>
        <begin position="110"/>
        <end position="130"/>
    </location>
</feature>
<feature type="transmembrane region" description="Helical" evidence="1">
    <location>
        <begin position="184"/>
        <end position="204"/>
    </location>
</feature>
<feature type="transmembrane region" description="Helical" evidence="1">
    <location>
        <begin position="215"/>
        <end position="235"/>
    </location>
</feature>
<feature type="transmembrane region" description="Helical" evidence="1">
    <location>
        <begin position="250"/>
        <end position="270"/>
    </location>
</feature>
<proteinExistence type="inferred from homology"/>
<comment type="function">
    <text evidence="1">Catalyzes the dephosphorylation of undecaprenyl diphosphate (UPP). Confers resistance to bacitracin.</text>
</comment>
<comment type="catalytic activity">
    <reaction evidence="1">
        <text>di-trans,octa-cis-undecaprenyl diphosphate + H2O = di-trans,octa-cis-undecaprenyl phosphate + phosphate + H(+)</text>
        <dbReference type="Rhea" id="RHEA:28094"/>
        <dbReference type="ChEBI" id="CHEBI:15377"/>
        <dbReference type="ChEBI" id="CHEBI:15378"/>
        <dbReference type="ChEBI" id="CHEBI:43474"/>
        <dbReference type="ChEBI" id="CHEBI:58405"/>
        <dbReference type="ChEBI" id="CHEBI:60392"/>
        <dbReference type="EC" id="3.6.1.27"/>
    </reaction>
</comment>
<comment type="subcellular location">
    <subcellularLocation>
        <location evidence="1">Cell inner membrane</location>
        <topology evidence="1">Multi-pass membrane protein</topology>
    </subcellularLocation>
</comment>
<comment type="miscellaneous">
    <text>Bacitracin is thought to be involved in the inhibition of peptidoglycan synthesis by sequestering undecaprenyl diphosphate, thereby reducing the pool of lipid carrier available.</text>
</comment>
<comment type="similarity">
    <text evidence="1">Belongs to the UppP family.</text>
</comment>
<reference key="1">
    <citation type="journal article" date="2002" name="Environ. Microbiol.">
        <title>Complete genome sequence and comparative analysis of the metabolically versatile Pseudomonas putida KT2440.</title>
        <authorList>
            <person name="Nelson K.E."/>
            <person name="Weinel C."/>
            <person name="Paulsen I.T."/>
            <person name="Dodson R.J."/>
            <person name="Hilbert H."/>
            <person name="Martins dos Santos V.A.P."/>
            <person name="Fouts D.E."/>
            <person name="Gill S.R."/>
            <person name="Pop M."/>
            <person name="Holmes M."/>
            <person name="Brinkac L.M."/>
            <person name="Beanan M.J."/>
            <person name="DeBoy R.T."/>
            <person name="Daugherty S.C."/>
            <person name="Kolonay J.F."/>
            <person name="Madupu R."/>
            <person name="Nelson W.C."/>
            <person name="White O."/>
            <person name="Peterson J.D."/>
            <person name="Khouri H.M."/>
            <person name="Hance I."/>
            <person name="Chris Lee P."/>
            <person name="Holtzapple E.K."/>
            <person name="Scanlan D."/>
            <person name="Tran K."/>
            <person name="Moazzez A."/>
            <person name="Utterback T.R."/>
            <person name="Rizzo M."/>
            <person name="Lee K."/>
            <person name="Kosack D."/>
            <person name="Moestl D."/>
            <person name="Wedler H."/>
            <person name="Lauber J."/>
            <person name="Stjepandic D."/>
            <person name="Hoheisel J."/>
            <person name="Straetz M."/>
            <person name="Heim S."/>
            <person name="Kiewitz C."/>
            <person name="Eisen J.A."/>
            <person name="Timmis K.N."/>
            <person name="Duesterhoeft A."/>
            <person name="Tuemmler B."/>
            <person name="Fraser C.M."/>
        </authorList>
    </citation>
    <scope>NUCLEOTIDE SEQUENCE [LARGE SCALE GENOMIC DNA]</scope>
    <source>
        <strain>ATCC 47054 / DSM 6125 / CFBP 8728 / NCIMB 11950 / KT2440</strain>
    </source>
</reference>
<evidence type="ECO:0000255" key="1">
    <source>
        <dbReference type="HAMAP-Rule" id="MF_01006"/>
    </source>
</evidence>
<name>UPPP_PSEPK</name>
<dbReference type="EC" id="3.6.1.27" evidence="1"/>
<dbReference type="EMBL" id="AE015451">
    <property type="protein sequence ID" value="AAN68470.1"/>
    <property type="molecule type" value="Genomic_DNA"/>
</dbReference>
<dbReference type="RefSeq" id="NP_745006.1">
    <property type="nucleotide sequence ID" value="NC_002947.4"/>
</dbReference>
<dbReference type="SMR" id="Q88IY7"/>
<dbReference type="STRING" id="160488.PP_2862"/>
<dbReference type="PaxDb" id="160488-PP_2862"/>
<dbReference type="KEGG" id="ppu:PP_2862"/>
<dbReference type="PATRIC" id="fig|160488.4.peg.3034"/>
<dbReference type="eggNOG" id="COG1968">
    <property type="taxonomic scope" value="Bacteria"/>
</dbReference>
<dbReference type="HOGENOM" id="CLU_060296_2_0_6"/>
<dbReference type="OrthoDB" id="9808289at2"/>
<dbReference type="PhylomeDB" id="Q88IY7"/>
<dbReference type="BioCyc" id="PPUT160488:G1G01-3041-MONOMER"/>
<dbReference type="Proteomes" id="UP000000556">
    <property type="component" value="Chromosome"/>
</dbReference>
<dbReference type="GO" id="GO:0005886">
    <property type="term" value="C:plasma membrane"/>
    <property type="evidence" value="ECO:0007669"/>
    <property type="project" value="UniProtKB-SubCell"/>
</dbReference>
<dbReference type="GO" id="GO:0050380">
    <property type="term" value="F:undecaprenyl-diphosphatase activity"/>
    <property type="evidence" value="ECO:0007669"/>
    <property type="project" value="UniProtKB-UniRule"/>
</dbReference>
<dbReference type="GO" id="GO:0071555">
    <property type="term" value="P:cell wall organization"/>
    <property type="evidence" value="ECO:0007669"/>
    <property type="project" value="UniProtKB-KW"/>
</dbReference>
<dbReference type="GO" id="GO:0009252">
    <property type="term" value="P:peptidoglycan biosynthetic process"/>
    <property type="evidence" value="ECO:0007669"/>
    <property type="project" value="UniProtKB-KW"/>
</dbReference>
<dbReference type="GO" id="GO:0008360">
    <property type="term" value="P:regulation of cell shape"/>
    <property type="evidence" value="ECO:0007669"/>
    <property type="project" value="UniProtKB-KW"/>
</dbReference>
<dbReference type="GO" id="GO:0046677">
    <property type="term" value="P:response to antibiotic"/>
    <property type="evidence" value="ECO:0007669"/>
    <property type="project" value="UniProtKB-UniRule"/>
</dbReference>
<dbReference type="HAMAP" id="MF_01006">
    <property type="entry name" value="Undec_diphosphatase"/>
    <property type="match status" value="1"/>
</dbReference>
<dbReference type="InterPro" id="IPR003824">
    <property type="entry name" value="UppP"/>
</dbReference>
<dbReference type="NCBIfam" id="NF001389">
    <property type="entry name" value="PRK00281.1-2"/>
    <property type="match status" value="1"/>
</dbReference>
<dbReference type="NCBIfam" id="NF001390">
    <property type="entry name" value="PRK00281.1-4"/>
    <property type="match status" value="1"/>
</dbReference>
<dbReference type="NCBIfam" id="TIGR00753">
    <property type="entry name" value="undec_PP_bacA"/>
    <property type="match status" value="1"/>
</dbReference>
<dbReference type="PANTHER" id="PTHR30622">
    <property type="entry name" value="UNDECAPRENYL-DIPHOSPHATASE"/>
    <property type="match status" value="1"/>
</dbReference>
<dbReference type="PANTHER" id="PTHR30622:SF3">
    <property type="entry name" value="UNDECAPRENYL-DIPHOSPHATASE"/>
    <property type="match status" value="1"/>
</dbReference>
<dbReference type="Pfam" id="PF02673">
    <property type="entry name" value="BacA"/>
    <property type="match status" value="1"/>
</dbReference>
<accession>Q88IY7</accession>
<protein>
    <recommendedName>
        <fullName evidence="1">Undecaprenyl-diphosphatase</fullName>
        <ecNumber evidence="1">3.6.1.27</ecNumber>
    </recommendedName>
    <alternativeName>
        <fullName evidence="1">Bacitracin resistance protein</fullName>
    </alternativeName>
    <alternativeName>
        <fullName evidence="1">Undecaprenyl pyrophosphate phosphatase</fullName>
    </alternativeName>
</protein>
<sequence length="277" mass="30730">MMDFWTAFQAIILGVVEGLTEFLPISSTGHQIIVADLIGFGGERAMAFNIIIQLAAILAVVWEFRSKIFEVVFGLTNQPKARRFTGNLLLAFMPAVVLGVLFADLIHEYLFNPVTVAAALVVGGVIMLWAERREHRVEVDHVDDMRWSHALKIGFIQCLAMIPGTSRSGSTIIGGLLFGLSRKAATEFSFFLAMPTMVGAAVYSGYKYRDLFQPGDLPVFALGFVTSFIFAMIAVRALLKFIANHSYAAFAWYRIVFGLFILATWQFGWVDWSTAHG</sequence>